<feature type="chain" id="PRO_0000153371" description="Histidinol-phosphate aminotransferase 2">
    <location>
        <begin position="1"/>
        <end position="366"/>
    </location>
</feature>
<feature type="modified residue" description="N6-(pyridoxal phosphate)lysine" evidence="1">
    <location>
        <position position="226"/>
    </location>
</feature>
<gene>
    <name evidence="1" type="primary">hisC2</name>
    <name type="ordered locus">NTHI1334</name>
</gene>
<keyword id="KW-0028">Amino-acid biosynthesis</keyword>
<keyword id="KW-0032">Aminotransferase</keyword>
<keyword id="KW-0368">Histidine biosynthesis</keyword>
<keyword id="KW-0663">Pyridoxal phosphate</keyword>
<keyword id="KW-0808">Transferase</keyword>
<reference key="1">
    <citation type="journal article" date="2005" name="J. Bacteriol.">
        <title>Genomic sequence of an otitis media isolate of nontypeable Haemophilus influenzae: comparative study with H. influenzae serotype d, strain KW20.</title>
        <authorList>
            <person name="Harrison A."/>
            <person name="Dyer D.W."/>
            <person name="Gillaspy A."/>
            <person name="Ray W.C."/>
            <person name="Mungur R."/>
            <person name="Carson M.B."/>
            <person name="Zhong H."/>
            <person name="Gipson J."/>
            <person name="Gipson M."/>
            <person name="Johnson L.S."/>
            <person name="Lewis L."/>
            <person name="Bakaletz L.O."/>
            <person name="Munson R.S. Jr."/>
        </authorList>
    </citation>
    <scope>NUCLEOTIDE SEQUENCE [LARGE SCALE GENOMIC DNA]</scope>
    <source>
        <strain>86-028NP</strain>
    </source>
</reference>
<sequence length="366" mass="41035">MQYINIANRGVKSLSPYQAGKPIEELEREIGISNIVKLASNENPFGFPESAKKAIFEQLDKLTRYPDANGFELKQTIAKKFGVQPNQITLGNGSNDLLELFAHTFATEGDEIIYSQYAFIVYPLVTKAINAIAKEIPAKNWGHDLQGFLTALSDKTKLIYIANPNNPTGNFLTSQEIEDFLAKVPENVIVVLDEAYTEFTRSEERVDSFSLLKKYSNLIISRTLSKAYGLAGLRIGYAVSNPEIADLLNRVRQPFNCNSLALTAAVAVMNDDEFIEKVAENNRIEMRRYEDFCQKNQLDYIPSKGNFITIDFKQPAAPIYDALLREGVIVRPIAGYGMPNHLRISIGLPEENDKFFTALSKVLKFA</sequence>
<comment type="catalytic activity">
    <reaction evidence="1">
        <text>L-histidinol phosphate + 2-oxoglutarate = 3-(imidazol-4-yl)-2-oxopropyl phosphate + L-glutamate</text>
        <dbReference type="Rhea" id="RHEA:23744"/>
        <dbReference type="ChEBI" id="CHEBI:16810"/>
        <dbReference type="ChEBI" id="CHEBI:29985"/>
        <dbReference type="ChEBI" id="CHEBI:57766"/>
        <dbReference type="ChEBI" id="CHEBI:57980"/>
        <dbReference type="EC" id="2.6.1.9"/>
    </reaction>
</comment>
<comment type="cofactor">
    <cofactor evidence="1">
        <name>pyridoxal 5'-phosphate</name>
        <dbReference type="ChEBI" id="CHEBI:597326"/>
    </cofactor>
</comment>
<comment type="pathway">
    <text evidence="1">Amino-acid biosynthesis; L-histidine biosynthesis; L-histidine from 5-phospho-alpha-D-ribose 1-diphosphate: step 7/9.</text>
</comment>
<comment type="subunit">
    <text evidence="1">Homodimer.</text>
</comment>
<comment type="similarity">
    <text evidence="1">Belongs to the class-II pyridoxal-phosphate-dependent aminotransferase family. Histidinol-phosphate aminotransferase subfamily.</text>
</comment>
<organism>
    <name type="scientific">Haemophilus influenzae (strain 86-028NP)</name>
    <dbReference type="NCBI Taxonomy" id="281310"/>
    <lineage>
        <taxon>Bacteria</taxon>
        <taxon>Pseudomonadati</taxon>
        <taxon>Pseudomonadota</taxon>
        <taxon>Gammaproteobacteria</taxon>
        <taxon>Pasteurellales</taxon>
        <taxon>Pasteurellaceae</taxon>
        <taxon>Haemophilus</taxon>
    </lineage>
</organism>
<dbReference type="EC" id="2.6.1.9" evidence="1"/>
<dbReference type="EMBL" id="CP000057">
    <property type="protein sequence ID" value="AAX88166.1"/>
    <property type="molecule type" value="Genomic_DNA"/>
</dbReference>
<dbReference type="RefSeq" id="WP_011272420.1">
    <property type="nucleotide sequence ID" value="NC_007146.2"/>
</dbReference>
<dbReference type="SMR" id="Q4QLD1"/>
<dbReference type="GeneID" id="93220172"/>
<dbReference type="KEGG" id="hit:NTHI1334"/>
<dbReference type="HOGENOM" id="CLU_017584_3_3_6"/>
<dbReference type="UniPathway" id="UPA00031">
    <property type="reaction ID" value="UER00012"/>
</dbReference>
<dbReference type="Proteomes" id="UP000002525">
    <property type="component" value="Chromosome"/>
</dbReference>
<dbReference type="GO" id="GO:0004400">
    <property type="term" value="F:histidinol-phosphate transaminase activity"/>
    <property type="evidence" value="ECO:0007669"/>
    <property type="project" value="UniProtKB-UniRule"/>
</dbReference>
<dbReference type="GO" id="GO:0030170">
    <property type="term" value="F:pyridoxal phosphate binding"/>
    <property type="evidence" value="ECO:0007669"/>
    <property type="project" value="InterPro"/>
</dbReference>
<dbReference type="GO" id="GO:0000105">
    <property type="term" value="P:L-histidine biosynthetic process"/>
    <property type="evidence" value="ECO:0007669"/>
    <property type="project" value="UniProtKB-UniRule"/>
</dbReference>
<dbReference type="CDD" id="cd00609">
    <property type="entry name" value="AAT_like"/>
    <property type="match status" value="1"/>
</dbReference>
<dbReference type="Gene3D" id="3.90.1150.10">
    <property type="entry name" value="Aspartate Aminotransferase, domain 1"/>
    <property type="match status" value="1"/>
</dbReference>
<dbReference type="Gene3D" id="3.40.640.10">
    <property type="entry name" value="Type I PLP-dependent aspartate aminotransferase-like (Major domain)"/>
    <property type="match status" value="1"/>
</dbReference>
<dbReference type="HAMAP" id="MF_01023">
    <property type="entry name" value="HisC_aminotrans_2"/>
    <property type="match status" value="1"/>
</dbReference>
<dbReference type="InterPro" id="IPR001917">
    <property type="entry name" value="Aminotrans_II_pyridoxalP_BS"/>
</dbReference>
<dbReference type="InterPro" id="IPR004839">
    <property type="entry name" value="Aminotransferase_I/II_large"/>
</dbReference>
<dbReference type="InterPro" id="IPR005861">
    <property type="entry name" value="HisP_aminotrans"/>
</dbReference>
<dbReference type="InterPro" id="IPR050106">
    <property type="entry name" value="HistidinolP_aminotransfase"/>
</dbReference>
<dbReference type="InterPro" id="IPR015424">
    <property type="entry name" value="PyrdxlP-dep_Trfase"/>
</dbReference>
<dbReference type="InterPro" id="IPR015421">
    <property type="entry name" value="PyrdxlP-dep_Trfase_major"/>
</dbReference>
<dbReference type="InterPro" id="IPR015422">
    <property type="entry name" value="PyrdxlP-dep_Trfase_small"/>
</dbReference>
<dbReference type="NCBIfam" id="TIGR01141">
    <property type="entry name" value="hisC"/>
    <property type="match status" value="1"/>
</dbReference>
<dbReference type="PANTHER" id="PTHR43643:SF3">
    <property type="entry name" value="HISTIDINOL-PHOSPHATE AMINOTRANSFERASE"/>
    <property type="match status" value="1"/>
</dbReference>
<dbReference type="PANTHER" id="PTHR43643">
    <property type="entry name" value="HISTIDINOL-PHOSPHATE AMINOTRANSFERASE 2"/>
    <property type="match status" value="1"/>
</dbReference>
<dbReference type="Pfam" id="PF00155">
    <property type="entry name" value="Aminotran_1_2"/>
    <property type="match status" value="1"/>
</dbReference>
<dbReference type="SUPFAM" id="SSF53383">
    <property type="entry name" value="PLP-dependent transferases"/>
    <property type="match status" value="1"/>
</dbReference>
<dbReference type="PROSITE" id="PS00599">
    <property type="entry name" value="AA_TRANSFER_CLASS_2"/>
    <property type="match status" value="1"/>
</dbReference>
<name>HIS82_HAEI8</name>
<proteinExistence type="inferred from homology"/>
<evidence type="ECO:0000255" key="1">
    <source>
        <dbReference type="HAMAP-Rule" id="MF_01023"/>
    </source>
</evidence>
<protein>
    <recommendedName>
        <fullName evidence="1">Histidinol-phosphate aminotransferase 2</fullName>
        <ecNumber evidence="1">2.6.1.9</ecNumber>
    </recommendedName>
    <alternativeName>
        <fullName evidence="1">Imidazole acetol-phosphate transaminase 2</fullName>
    </alternativeName>
</protein>
<accession>Q4QLD1</accession>